<name>FGF7_PIG</name>
<protein>
    <recommendedName>
        <fullName>Fibroblast growth factor 7</fullName>
        <shortName>FGF-7</shortName>
    </recommendedName>
    <alternativeName>
        <fullName>Heparin-binding growth factor 7</fullName>
        <shortName>HBGF-7</shortName>
    </alternativeName>
    <alternativeName>
        <fullName>Keratinocyte growth factor</fullName>
        <shortName>KGF</shortName>
    </alternativeName>
</protein>
<feature type="signal peptide" evidence="1">
    <location>
        <begin position="1"/>
        <end position="31"/>
    </location>
</feature>
<feature type="chain" id="PRO_0000008967" description="Fibroblast growth factor 7">
    <location>
        <begin position="32"/>
        <end position="194"/>
    </location>
</feature>
<feature type="glycosylation site" description="N-linked (GlcNAc...) asparagine" evidence="2">
    <location>
        <position position="45"/>
    </location>
</feature>
<evidence type="ECO:0000250" key="1"/>
<evidence type="ECO:0000255" key="2"/>
<evidence type="ECO:0000305" key="3"/>
<proteinExistence type="evidence at transcript level"/>
<comment type="function">
    <text evidence="1">Plays an important role in the regulation of embryonic development, cell proliferation and cell differentiation. Required for normal branching morphogenesis. Growth factor active on keratinocytes. Possible major paracrine effector of normal epithelial cell proliferation (By similarity).</text>
</comment>
<comment type="subunit">
    <text evidence="1">Interacts with FGFBP1. Interacts with FGFR2. Affinity between fibroblast growth factors (FGFs) and their receptors is increased by heparan sulfate glycosaminoglycans that function as coreceptors (By similarity).</text>
</comment>
<comment type="subcellular location">
    <subcellularLocation>
        <location evidence="1">Secreted</location>
    </subcellularLocation>
</comment>
<comment type="similarity">
    <text evidence="3">Belongs to the heparin-binding growth factors family.</text>
</comment>
<reference key="1">
    <citation type="journal article" date="2000" name="Biol. Reprod.">
        <title>Keratinocyte growth factor: expression by endometrial epithelia of the porcine uterus.</title>
        <authorList>
            <person name="Ka H."/>
            <person name="Spencer T.E."/>
            <person name="Johnson G.A."/>
            <person name="Bazer F.W."/>
        </authorList>
    </citation>
    <scope>NUCLEOTIDE SEQUENCE [MRNA]</scope>
    <source>
        <tissue>Endometrium</tissue>
    </source>
</reference>
<dbReference type="EMBL" id="AF217463">
    <property type="protein sequence ID" value="AAF26734.1"/>
    <property type="molecule type" value="mRNA"/>
</dbReference>
<dbReference type="SMR" id="Q9N198"/>
<dbReference type="FunCoup" id="Q9N198">
    <property type="interactions" value="196"/>
</dbReference>
<dbReference type="GlyCosmos" id="Q9N198">
    <property type="glycosylation" value="1 site, No reported glycans"/>
</dbReference>
<dbReference type="GlyGen" id="Q9N198">
    <property type="glycosylation" value="1 site"/>
</dbReference>
<dbReference type="PaxDb" id="9823-ENSSSCP00000005010"/>
<dbReference type="eggNOG" id="KOG3885">
    <property type="taxonomic scope" value="Eukaryota"/>
</dbReference>
<dbReference type="InParanoid" id="Q9N198"/>
<dbReference type="ChiTaRS" id="FGF7">
    <property type="organism name" value="pig"/>
</dbReference>
<dbReference type="Proteomes" id="UP000008227">
    <property type="component" value="Unplaced"/>
</dbReference>
<dbReference type="Proteomes" id="UP000314985">
    <property type="component" value="Unplaced"/>
</dbReference>
<dbReference type="Proteomes" id="UP000694570">
    <property type="component" value="Unplaced"/>
</dbReference>
<dbReference type="Proteomes" id="UP000694571">
    <property type="component" value="Unplaced"/>
</dbReference>
<dbReference type="Proteomes" id="UP000694720">
    <property type="component" value="Unplaced"/>
</dbReference>
<dbReference type="Proteomes" id="UP000694722">
    <property type="component" value="Unplaced"/>
</dbReference>
<dbReference type="Proteomes" id="UP000694723">
    <property type="component" value="Unplaced"/>
</dbReference>
<dbReference type="Proteomes" id="UP000694724">
    <property type="component" value="Unplaced"/>
</dbReference>
<dbReference type="Proteomes" id="UP000694725">
    <property type="component" value="Unplaced"/>
</dbReference>
<dbReference type="Proteomes" id="UP000694726">
    <property type="component" value="Unplaced"/>
</dbReference>
<dbReference type="Proteomes" id="UP000694727">
    <property type="component" value="Unplaced"/>
</dbReference>
<dbReference type="Proteomes" id="UP000694728">
    <property type="component" value="Unplaced"/>
</dbReference>
<dbReference type="GO" id="GO:0005737">
    <property type="term" value="C:cytoplasm"/>
    <property type="evidence" value="ECO:0000318"/>
    <property type="project" value="GO_Central"/>
</dbReference>
<dbReference type="GO" id="GO:0005615">
    <property type="term" value="C:extracellular space"/>
    <property type="evidence" value="ECO:0000318"/>
    <property type="project" value="GO_Central"/>
</dbReference>
<dbReference type="GO" id="GO:0008083">
    <property type="term" value="F:growth factor activity"/>
    <property type="evidence" value="ECO:0000318"/>
    <property type="project" value="GO_Central"/>
</dbReference>
<dbReference type="GO" id="GO:0008201">
    <property type="term" value="F:heparin binding"/>
    <property type="evidence" value="ECO:0007669"/>
    <property type="project" value="UniProtKB-KW"/>
</dbReference>
<dbReference type="GO" id="GO:0005111">
    <property type="term" value="F:type 2 fibroblast growth factor receptor binding"/>
    <property type="evidence" value="ECO:0000318"/>
    <property type="project" value="GO_Central"/>
</dbReference>
<dbReference type="GO" id="GO:0008543">
    <property type="term" value="P:fibroblast growth factor receptor signaling pathway"/>
    <property type="evidence" value="ECO:0000318"/>
    <property type="project" value="GO_Central"/>
</dbReference>
<dbReference type="GO" id="GO:0030324">
    <property type="term" value="P:lung development"/>
    <property type="evidence" value="ECO:0000318"/>
    <property type="project" value="GO_Central"/>
</dbReference>
<dbReference type="GO" id="GO:0022008">
    <property type="term" value="P:neurogenesis"/>
    <property type="evidence" value="ECO:0000318"/>
    <property type="project" value="GO_Central"/>
</dbReference>
<dbReference type="GO" id="GO:0051781">
    <property type="term" value="P:positive regulation of cell division"/>
    <property type="evidence" value="ECO:0007669"/>
    <property type="project" value="UniProtKB-KW"/>
</dbReference>
<dbReference type="GO" id="GO:0050679">
    <property type="term" value="P:positive regulation of epithelial cell proliferation"/>
    <property type="evidence" value="ECO:0000318"/>
    <property type="project" value="GO_Central"/>
</dbReference>
<dbReference type="GO" id="GO:0043410">
    <property type="term" value="P:positive regulation of MAPK cascade"/>
    <property type="evidence" value="ECO:0000318"/>
    <property type="project" value="GO_Central"/>
</dbReference>
<dbReference type="GO" id="GO:0030334">
    <property type="term" value="P:regulation of cell migration"/>
    <property type="evidence" value="ECO:0000318"/>
    <property type="project" value="GO_Central"/>
</dbReference>
<dbReference type="CDD" id="cd23319">
    <property type="entry name" value="beta-trefoil_FGF7"/>
    <property type="match status" value="1"/>
</dbReference>
<dbReference type="FunFam" id="2.80.10.50:FF:000004">
    <property type="entry name" value="Fibroblast growth factor"/>
    <property type="match status" value="1"/>
</dbReference>
<dbReference type="Gene3D" id="2.80.10.50">
    <property type="match status" value="1"/>
</dbReference>
<dbReference type="InterPro" id="IPR002209">
    <property type="entry name" value="Fibroblast_GF_fam"/>
</dbReference>
<dbReference type="InterPro" id="IPR008996">
    <property type="entry name" value="IL1/FGF"/>
</dbReference>
<dbReference type="PANTHER" id="PTHR11486">
    <property type="entry name" value="FIBROBLAST GROWTH FACTOR"/>
    <property type="match status" value="1"/>
</dbReference>
<dbReference type="Pfam" id="PF00167">
    <property type="entry name" value="FGF"/>
    <property type="match status" value="1"/>
</dbReference>
<dbReference type="PRINTS" id="PR00263">
    <property type="entry name" value="HBGFFGF"/>
</dbReference>
<dbReference type="PRINTS" id="PR00262">
    <property type="entry name" value="IL1HBGF"/>
</dbReference>
<dbReference type="SMART" id="SM00442">
    <property type="entry name" value="FGF"/>
    <property type="match status" value="1"/>
</dbReference>
<dbReference type="SUPFAM" id="SSF50353">
    <property type="entry name" value="Cytokine"/>
    <property type="match status" value="1"/>
</dbReference>
<dbReference type="PROSITE" id="PS00247">
    <property type="entry name" value="HBGF_FGF"/>
    <property type="match status" value="1"/>
</dbReference>
<accession>Q9N198</accession>
<gene>
    <name type="primary">FGF7</name>
</gene>
<organism>
    <name type="scientific">Sus scrofa</name>
    <name type="common">Pig</name>
    <dbReference type="NCBI Taxonomy" id="9823"/>
    <lineage>
        <taxon>Eukaryota</taxon>
        <taxon>Metazoa</taxon>
        <taxon>Chordata</taxon>
        <taxon>Craniata</taxon>
        <taxon>Vertebrata</taxon>
        <taxon>Euteleostomi</taxon>
        <taxon>Mammalia</taxon>
        <taxon>Eutheria</taxon>
        <taxon>Laurasiatheria</taxon>
        <taxon>Artiodactyla</taxon>
        <taxon>Suina</taxon>
        <taxon>Suidae</taxon>
        <taxon>Sus</taxon>
    </lineage>
</organism>
<keyword id="KW-0325">Glycoprotein</keyword>
<keyword id="KW-0339">Growth factor</keyword>
<keyword id="KW-0358">Heparin-binding</keyword>
<keyword id="KW-0497">Mitogen</keyword>
<keyword id="KW-1185">Reference proteome</keyword>
<keyword id="KW-0964">Secreted</keyword>
<keyword id="KW-0732">Signal</keyword>
<sequence>MRKWILTWILPSLLHRSCFHIICLVGTLSLDCNDMTPEQMATNVNCSSPERHTRSYDYMEGGDIRVRRLFCRTQWYPRIGKRGKVKGTQEMKNNYNIMEIRTVAVGIVAIKGVVSEYYLAMNKEGKLYAKKEYNEDCNFKELILENHYNTYASAKWTHSGGEMFVALNQKGVPVRGKKTKKEQKTAHFLPMAIT</sequence>